<comment type="function">
    <text evidence="1">Catalyzes the ATP-dependent phosphorylation of N-acetyl-L-glutamate.</text>
</comment>
<comment type="catalytic activity">
    <reaction evidence="1">
        <text>N-acetyl-L-glutamate + ATP = N-acetyl-L-glutamyl 5-phosphate + ADP</text>
        <dbReference type="Rhea" id="RHEA:14629"/>
        <dbReference type="ChEBI" id="CHEBI:30616"/>
        <dbReference type="ChEBI" id="CHEBI:44337"/>
        <dbReference type="ChEBI" id="CHEBI:57936"/>
        <dbReference type="ChEBI" id="CHEBI:456216"/>
        <dbReference type="EC" id="2.7.2.8"/>
    </reaction>
</comment>
<comment type="pathway">
    <text evidence="1">Amino-acid biosynthesis; L-arginine biosynthesis; N(2)-acetyl-L-ornithine from L-glutamate: step 2/4.</text>
</comment>
<comment type="subcellular location">
    <subcellularLocation>
        <location evidence="1">Cytoplasm</location>
    </subcellularLocation>
</comment>
<comment type="similarity">
    <text evidence="1">Belongs to the acetylglutamate kinase family. ArgB subfamily.</text>
</comment>
<accession>A0LEB5</accession>
<proteinExistence type="inferred from homology"/>
<keyword id="KW-0028">Amino-acid biosynthesis</keyword>
<keyword id="KW-0055">Arginine biosynthesis</keyword>
<keyword id="KW-0067">ATP-binding</keyword>
<keyword id="KW-0963">Cytoplasm</keyword>
<keyword id="KW-0418">Kinase</keyword>
<keyword id="KW-0547">Nucleotide-binding</keyword>
<keyword id="KW-1185">Reference proteome</keyword>
<keyword id="KW-0808">Transferase</keyword>
<name>ARGB_SYNFM</name>
<feature type="chain" id="PRO_0000335671" description="Acetylglutamate kinase">
    <location>
        <begin position="1"/>
        <end position="298"/>
    </location>
</feature>
<feature type="binding site" evidence="1">
    <location>
        <begin position="61"/>
        <end position="62"/>
    </location>
    <ligand>
        <name>substrate</name>
    </ligand>
</feature>
<feature type="binding site" evidence="1">
    <location>
        <position position="83"/>
    </location>
    <ligand>
        <name>substrate</name>
    </ligand>
</feature>
<feature type="binding site" evidence="1">
    <location>
        <position position="188"/>
    </location>
    <ligand>
        <name>substrate</name>
    </ligand>
</feature>
<feature type="site" description="Transition state stabilizer" evidence="1">
    <location>
        <position position="26"/>
    </location>
</feature>
<feature type="site" description="Transition state stabilizer" evidence="1">
    <location>
        <position position="248"/>
    </location>
</feature>
<reference key="1">
    <citation type="submission" date="2006-10" db="EMBL/GenBank/DDBJ databases">
        <title>Complete sequence of Syntrophobacter fumaroxidans MPOB.</title>
        <authorList>
            <consortium name="US DOE Joint Genome Institute"/>
            <person name="Copeland A."/>
            <person name="Lucas S."/>
            <person name="Lapidus A."/>
            <person name="Barry K."/>
            <person name="Detter J.C."/>
            <person name="Glavina del Rio T."/>
            <person name="Hammon N."/>
            <person name="Israni S."/>
            <person name="Pitluck S."/>
            <person name="Goltsman E.G."/>
            <person name="Martinez M."/>
            <person name="Schmutz J."/>
            <person name="Larimer F."/>
            <person name="Land M."/>
            <person name="Hauser L."/>
            <person name="Kyrpides N."/>
            <person name="Kim E."/>
            <person name="Boone D.R."/>
            <person name="Brockman F."/>
            <person name="Culley D."/>
            <person name="Ferry J."/>
            <person name="Gunsalus R."/>
            <person name="McInerney M.J."/>
            <person name="Morrison M."/>
            <person name="Plugge C."/>
            <person name="Rohlin L."/>
            <person name="Scholten J."/>
            <person name="Sieber J."/>
            <person name="Stams A.J.M."/>
            <person name="Worm P."/>
            <person name="Henstra A.M."/>
            <person name="Richardson P."/>
        </authorList>
    </citation>
    <scope>NUCLEOTIDE SEQUENCE [LARGE SCALE GENOMIC DNA]</scope>
    <source>
        <strain>DSM 10017 / MPOB</strain>
    </source>
</reference>
<dbReference type="EC" id="2.7.2.8" evidence="1"/>
<dbReference type="EMBL" id="CP000478">
    <property type="protein sequence ID" value="ABK15767.1"/>
    <property type="molecule type" value="Genomic_DNA"/>
</dbReference>
<dbReference type="RefSeq" id="WP_011696940.1">
    <property type="nucleotide sequence ID" value="NC_008554.1"/>
</dbReference>
<dbReference type="SMR" id="A0LEB5"/>
<dbReference type="FunCoup" id="A0LEB5">
    <property type="interactions" value="356"/>
</dbReference>
<dbReference type="STRING" id="335543.Sfum_0064"/>
<dbReference type="KEGG" id="sfu:Sfum_0064"/>
<dbReference type="eggNOG" id="COG0548">
    <property type="taxonomic scope" value="Bacteria"/>
</dbReference>
<dbReference type="HOGENOM" id="CLU_053680_0_0_7"/>
<dbReference type="InParanoid" id="A0LEB5"/>
<dbReference type="OrthoDB" id="9803155at2"/>
<dbReference type="UniPathway" id="UPA00068">
    <property type="reaction ID" value="UER00107"/>
</dbReference>
<dbReference type="Proteomes" id="UP000001784">
    <property type="component" value="Chromosome"/>
</dbReference>
<dbReference type="GO" id="GO:0005737">
    <property type="term" value="C:cytoplasm"/>
    <property type="evidence" value="ECO:0007669"/>
    <property type="project" value="UniProtKB-SubCell"/>
</dbReference>
<dbReference type="GO" id="GO:0003991">
    <property type="term" value="F:acetylglutamate kinase activity"/>
    <property type="evidence" value="ECO:0007669"/>
    <property type="project" value="UniProtKB-UniRule"/>
</dbReference>
<dbReference type="GO" id="GO:0005524">
    <property type="term" value="F:ATP binding"/>
    <property type="evidence" value="ECO:0007669"/>
    <property type="project" value="UniProtKB-UniRule"/>
</dbReference>
<dbReference type="GO" id="GO:0042450">
    <property type="term" value="P:arginine biosynthetic process via ornithine"/>
    <property type="evidence" value="ECO:0007669"/>
    <property type="project" value="UniProtKB-UniRule"/>
</dbReference>
<dbReference type="GO" id="GO:0006526">
    <property type="term" value="P:L-arginine biosynthetic process"/>
    <property type="evidence" value="ECO:0007669"/>
    <property type="project" value="UniProtKB-UniPathway"/>
</dbReference>
<dbReference type="CDD" id="cd04250">
    <property type="entry name" value="AAK_NAGK-C"/>
    <property type="match status" value="1"/>
</dbReference>
<dbReference type="FunFam" id="3.40.1160.10:FF:000004">
    <property type="entry name" value="Acetylglutamate kinase"/>
    <property type="match status" value="1"/>
</dbReference>
<dbReference type="Gene3D" id="3.40.1160.10">
    <property type="entry name" value="Acetylglutamate kinase-like"/>
    <property type="match status" value="1"/>
</dbReference>
<dbReference type="HAMAP" id="MF_00082">
    <property type="entry name" value="ArgB"/>
    <property type="match status" value="1"/>
</dbReference>
<dbReference type="InterPro" id="IPR036393">
    <property type="entry name" value="AceGlu_kinase-like_sf"/>
</dbReference>
<dbReference type="InterPro" id="IPR004662">
    <property type="entry name" value="AcgluKinase_fam"/>
</dbReference>
<dbReference type="InterPro" id="IPR037528">
    <property type="entry name" value="ArgB"/>
</dbReference>
<dbReference type="InterPro" id="IPR001048">
    <property type="entry name" value="Asp/Glu/Uridylate_kinase"/>
</dbReference>
<dbReference type="InterPro" id="IPR001057">
    <property type="entry name" value="Glu/AcGlu_kinase"/>
</dbReference>
<dbReference type="InterPro" id="IPR041727">
    <property type="entry name" value="NAGK-C"/>
</dbReference>
<dbReference type="NCBIfam" id="TIGR00761">
    <property type="entry name" value="argB"/>
    <property type="match status" value="1"/>
</dbReference>
<dbReference type="PANTHER" id="PTHR23342">
    <property type="entry name" value="N-ACETYLGLUTAMATE SYNTHASE"/>
    <property type="match status" value="1"/>
</dbReference>
<dbReference type="PANTHER" id="PTHR23342:SF0">
    <property type="entry name" value="N-ACETYLGLUTAMATE SYNTHASE, MITOCHONDRIAL"/>
    <property type="match status" value="1"/>
</dbReference>
<dbReference type="Pfam" id="PF00696">
    <property type="entry name" value="AA_kinase"/>
    <property type="match status" value="1"/>
</dbReference>
<dbReference type="PIRSF" id="PIRSF000728">
    <property type="entry name" value="NAGK"/>
    <property type="match status" value="1"/>
</dbReference>
<dbReference type="PRINTS" id="PR00474">
    <property type="entry name" value="GLU5KINASE"/>
</dbReference>
<dbReference type="SUPFAM" id="SSF53633">
    <property type="entry name" value="Carbamate kinase-like"/>
    <property type="match status" value="1"/>
</dbReference>
<gene>
    <name evidence="1" type="primary">argB</name>
    <name type="ordered locus">Sfum_0064</name>
</gene>
<sequence>MIEKAGILIEALPYIRRFYGKTVVIKYGGNAMVAEELKESFAKDIVLMKYIGINPVVVHGGGPQIGRMLKRIGKESDFCAGMRVTDADTMDIVEMVLAGKINKEIVSLINRHGGHAVGLSGKDGNLIEARKLHVYRYKGDDQPPEIIDIGLVGEVNRVNVSILDTLAGGNLIPVIAPVGVGEQGETYNINADLVAGHIAGALQAAKLVLMTDVEGVLDGGGNLISSLTVAEAADALQDETLKGGMIPKVQCAIDALQSGVDKVHIVDGRVPHAILLEIFTDAGVGTEIVRYRRGQSVG</sequence>
<evidence type="ECO:0000255" key="1">
    <source>
        <dbReference type="HAMAP-Rule" id="MF_00082"/>
    </source>
</evidence>
<protein>
    <recommendedName>
        <fullName evidence="1">Acetylglutamate kinase</fullName>
        <ecNumber evidence="1">2.7.2.8</ecNumber>
    </recommendedName>
    <alternativeName>
        <fullName evidence="1">N-acetyl-L-glutamate 5-phosphotransferase</fullName>
    </alternativeName>
    <alternativeName>
        <fullName evidence="1">NAG kinase</fullName>
        <shortName evidence="1">NAGK</shortName>
    </alternativeName>
</protein>
<organism>
    <name type="scientific">Syntrophobacter fumaroxidans (strain DSM 10017 / MPOB)</name>
    <dbReference type="NCBI Taxonomy" id="335543"/>
    <lineage>
        <taxon>Bacteria</taxon>
        <taxon>Pseudomonadati</taxon>
        <taxon>Thermodesulfobacteriota</taxon>
        <taxon>Syntrophobacteria</taxon>
        <taxon>Syntrophobacterales</taxon>
        <taxon>Syntrophobacteraceae</taxon>
        <taxon>Syntrophobacter</taxon>
    </lineage>
</organism>